<comment type="function">
    <text evidence="2 3 4">Potent broad-spectrum antibacterial peptide against both Gram-positive (B.subtilis, S.epidermidis, and S.aureus) and Gram-negative bacteria (E.coli, S.typhimurium, and P.aeruginosa) (PubMed:20721297, PubMed:23137439). Is also active against all antibiotic-resistant bacterial strains tested (PubMed:23137439). Induces apoptosis in C.albicans, but does not disrupt the fungal plasma membrane at all (PubMed:22542795). Acts by permeabilizing the bacterial cell membrane, but not human membranes (PubMed:23137439). Also shows potent anti-inflammatory activities, since it reduces both LPS-induced nitric oxide release and pro-inflammatory cytokine production (PubMed:23137439). Anti-inflammatory activities are initiated by suppressing the binding of LPS to toll-like receptor 4 (TLR4), and subsequently inhibiting the phosphorylation of p38 mitogen-activated protein kinase (MAPK) and nuclear translocation of NF-kB (TNFRSF11A) (PubMed:23137439). Does not show hemolytic activity against human erythrocytes (PubMed:23137439).</text>
</comment>
<comment type="subcellular location">
    <subcellularLocation>
        <location evidence="4">Secreted</location>
    </subcellularLocation>
    <subcellularLocation>
        <location evidence="4">Target cell membrane</location>
    </subcellularLocation>
</comment>
<comment type="induction">
    <text evidence="2">Up-regulated from 4 hours after E.coli bacteria injection and higher expression level is reached at 16 hours.</text>
</comment>
<comment type="domain">
    <text evidence="4">Has the structural arrangement of an alpha-helix connected to antiparallel beta-sheets by disulfide bonds (CS-alpha/beta) (PubMed:23137439). The alpha-helix is amphipathic (PubMed:23137439).</text>
</comment>
<comment type="pharmaceutical">
    <text evidence="4 5 6">Coprisin-derivatives (such as CopA3, and dCopW3) may be used as potent antibiotic therapeutic agent, or in treatment against tumors.</text>
</comment>
<comment type="miscellaneous">
    <text evidence="2">The nonamer peptide CopA3 exhibits potent antibacterial activities (MIC=4-8 ug/mL) against both E.coli and S.aureus. This peptide (LLCIALRKK-NH2) is shorter than the mature peptide, amidated and with a Leu at position 60 instead of a His residue.</text>
</comment>
<comment type="similarity">
    <text evidence="8">Belongs to the invertebrate defensin family. Type 1 subfamily.</text>
</comment>
<comment type="caution">
    <text evidence="9 10">Several experiments have been done with an amidated coprisin, although the amide donor for C-terminal amidation (usually a Gly residue) is missing in the precursor sequence.</text>
</comment>
<feature type="signal peptide" evidence="1">
    <location>
        <begin position="1"/>
        <end position="20"/>
    </location>
</feature>
<feature type="propeptide" id="PRO_0000452544" evidence="9">
    <location>
        <begin position="21"/>
        <end position="37"/>
    </location>
</feature>
<feature type="chain" id="PRO_5002746492" description="Defensin coprisin" evidence="9">
    <location>
        <begin position="38"/>
        <end position="80"/>
    </location>
</feature>
<feature type="disulfide bond" evidence="4 11">
    <location>
        <begin position="40"/>
        <end position="71"/>
    </location>
</feature>
<feature type="disulfide bond" evidence="4 11">
    <location>
        <begin position="57"/>
        <end position="76"/>
    </location>
</feature>
<feature type="disulfide bond" evidence="4 11">
    <location>
        <begin position="61"/>
        <end position="78"/>
    </location>
</feature>
<feature type="helix" evidence="12">
    <location>
        <begin position="56"/>
        <end position="65"/>
    </location>
</feature>
<feature type="strand" evidence="12">
    <location>
        <begin position="67"/>
        <end position="72"/>
    </location>
</feature>
<feature type="strand" evidence="12">
    <location>
        <begin position="75"/>
        <end position="79"/>
    </location>
</feature>
<sequence>MAKLIAFALVASLCLSMVLCNPLPEEVQEEGLVRQKRVTCDVLSFEAKGIAVNHSACALHCIALRKKGGSCQNGVCVCRN</sequence>
<organism>
    <name type="scientific">Copris tripartitus</name>
    <name type="common">Dung beetle</name>
    <dbReference type="NCBI Taxonomy" id="438892"/>
    <lineage>
        <taxon>Eukaryota</taxon>
        <taxon>Metazoa</taxon>
        <taxon>Ecdysozoa</taxon>
        <taxon>Arthropoda</taxon>
        <taxon>Hexapoda</taxon>
        <taxon>Insecta</taxon>
        <taxon>Pterygota</taxon>
        <taxon>Neoptera</taxon>
        <taxon>Endopterygota</taxon>
        <taxon>Coleoptera</taxon>
        <taxon>Polyphaga</taxon>
        <taxon>Scarabaeiformia</taxon>
        <taxon>Scarabaeidae</taxon>
        <taxon>Scarabaeinae</taxon>
        <taxon>Coprini</taxon>
        <taxon>Copris</taxon>
    </lineage>
</organism>
<keyword id="KW-0002">3D-structure</keyword>
<keyword id="KW-0044">Antibiotic</keyword>
<keyword id="KW-0929">Antimicrobial</keyword>
<keyword id="KW-0165">Cleavage on pair of basic residues</keyword>
<keyword id="KW-0211">Defensin</keyword>
<keyword id="KW-1015">Disulfide bond</keyword>
<keyword id="KW-0295">Fungicide</keyword>
<keyword id="KW-0391">Immunity</keyword>
<keyword id="KW-0399">Innate immunity</keyword>
<keyword id="KW-0472">Membrane</keyword>
<keyword id="KW-0582">Pharmaceutical</keyword>
<keyword id="KW-0964">Secreted</keyword>
<keyword id="KW-0732">Signal</keyword>
<keyword id="KW-1052">Target cell membrane</keyword>
<keyword id="KW-1053">Target membrane</keyword>
<proteinExistence type="evidence at protein level"/>
<name>DEF_COPTR</name>
<accession>A9XFZ7</accession>
<protein>
    <recommendedName>
        <fullName evidence="7">Defensin coprisin</fullName>
    </recommendedName>
</protein>
<dbReference type="EMBL" id="EF208958">
    <property type="protein sequence ID" value="ABP97087.1"/>
    <property type="molecule type" value="mRNA"/>
</dbReference>
<dbReference type="PDB" id="2LN4">
    <property type="method" value="NMR"/>
    <property type="chains" value="A=38-80"/>
</dbReference>
<dbReference type="PDBsum" id="2LN4"/>
<dbReference type="SMR" id="A9XFZ7"/>
<dbReference type="EvolutionaryTrace" id="A9XFZ7"/>
<dbReference type="GO" id="GO:0005615">
    <property type="term" value="C:extracellular space"/>
    <property type="evidence" value="ECO:0007669"/>
    <property type="project" value="TreeGrafter"/>
</dbReference>
<dbReference type="GO" id="GO:0016020">
    <property type="term" value="C:membrane"/>
    <property type="evidence" value="ECO:0007669"/>
    <property type="project" value="UniProtKB-KW"/>
</dbReference>
<dbReference type="GO" id="GO:0044218">
    <property type="term" value="C:other organism cell membrane"/>
    <property type="evidence" value="ECO:0007669"/>
    <property type="project" value="UniProtKB-KW"/>
</dbReference>
<dbReference type="GO" id="GO:0042742">
    <property type="term" value="P:defense response to bacterium"/>
    <property type="evidence" value="ECO:0007669"/>
    <property type="project" value="UniProtKB-KW"/>
</dbReference>
<dbReference type="GO" id="GO:0050832">
    <property type="term" value="P:defense response to fungus"/>
    <property type="evidence" value="ECO:0007669"/>
    <property type="project" value="UniProtKB-KW"/>
</dbReference>
<dbReference type="GO" id="GO:0006959">
    <property type="term" value="P:humoral immune response"/>
    <property type="evidence" value="ECO:0007669"/>
    <property type="project" value="TreeGrafter"/>
</dbReference>
<dbReference type="GO" id="GO:0045087">
    <property type="term" value="P:innate immune response"/>
    <property type="evidence" value="ECO:0007669"/>
    <property type="project" value="UniProtKB-KW"/>
</dbReference>
<dbReference type="GO" id="GO:0031640">
    <property type="term" value="P:killing of cells of another organism"/>
    <property type="evidence" value="ECO:0007669"/>
    <property type="project" value="UniProtKB-KW"/>
</dbReference>
<dbReference type="CDD" id="cd21806">
    <property type="entry name" value="DEFL_defensin-like"/>
    <property type="match status" value="1"/>
</dbReference>
<dbReference type="Gene3D" id="3.30.30.10">
    <property type="entry name" value="Knottin, scorpion toxin-like"/>
    <property type="match status" value="1"/>
</dbReference>
<dbReference type="InterPro" id="IPR017982">
    <property type="entry name" value="Defensin_insect"/>
</dbReference>
<dbReference type="InterPro" id="IPR001542">
    <property type="entry name" value="Defensin_invertebrate/fungal"/>
</dbReference>
<dbReference type="InterPro" id="IPR003614">
    <property type="entry name" value="Scorpion_toxin-like"/>
</dbReference>
<dbReference type="InterPro" id="IPR036574">
    <property type="entry name" value="Scorpion_toxin-like_sf"/>
</dbReference>
<dbReference type="PANTHER" id="PTHR13645">
    <property type="entry name" value="DEFENSIN"/>
    <property type="match status" value="1"/>
</dbReference>
<dbReference type="PANTHER" id="PTHR13645:SF0">
    <property type="entry name" value="DEFENSIN"/>
    <property type="match status" value="1"/>
</dbReference>
<dbReference type="Pfam" id="PF01097">
    <property type="entry name" value="Defensin_2"/>
    <property type="match status" value="1"/>
</dbReference>
<dbReference type="PRINTS" id="PR00271">
    <property type="entry name" value="DEFENSIN"/>
</dbReference>
<dbReference type="SMART" id="SM00505">
    <property type="entry name" value="Knot1"/>
    <property type="match status" value="1"/>
</dbReference>
<dbReference type="SUPFAM" id="SSF57095">
    <property type="entry name" value="Scorpion toxin-like"/>
    <property type="match status" value="1"/>
</dbReference>
<dbReference type="PROSITE" id="PS51378">
    <property type="entry name" value="INVERT_DEFENSINS"/>
    <property type="match status" value="1"/>
</dbReference>
<evidence type="ECO:0000255" key="1"/>
<evidence type="ECO:0000269" key="2">
    <source>
    </source>
</evidence>
<evidence type="ECO:0000269" key="3">
    <source>
    </source>
</evidence>
<evidence type="ECO:0000269" key="4">
    <source>
    </source>
</evidence>
<evidence type="ECO:0000269" key="5">
    <source>
    </source>
</evidence>
<evidence type="ECO:0000269" key="6">
    <source>
    </source>
</evidence>
<evidence type="ECO:0000303" key="7">
    <source>
    </source>
</evidence>
<evidence type="ECO:0000305" key="8"/>
<evidence type="ECO:0000305" key="9">
    <source>
    </source>
</evidence>
<evidence type="ECO:0000305" key="10">
    <source>
    </source>
</evidence>
<evidence type="ECO:0007744" key="11">
    <source>
        <dbReference type="PDB" id="2LN4"/>
    </source>
</evidence>
<evidence type="ECO:0007829" key="12">
    <source>
        <dbReference type="PDB" id="2LN4"/>
    </source>
</evidence>
<reference key="1">
    <citation type="journal article" date="2009" name="Int. J. Pept.">
        <title>Isolation and characterization of a defensin-like peptide (coprisin) from the dung beetle, Copris tripartitus.</title>
        <authorList>
            <person name="Hwang J.S."/>
            <person name="Lee J."/>
            <person name="Kim Y.J."/>
            <person name="Bang H.S."/>
            <person name="Yun E.Y."/>
            <person name="Kim S.R."/>
            <person name="Suh H.J."/>
            <person name="Kang B.R."/>
            <person name="Nam S.H."/>
            <person name="Jeon J.P."/>
            <person name="Kim I."/>
            <person name="Lee D.G."/>
        </authorList>
    </citation>
    <scope>NUCLEOTIDE SEQUENCE [MRNA]</scope>
    <scope>FUNCTION</scope>
    <scope>SYNTHESIS OF 38-80</scope>
    <scope>INDUCTION BY BACTERIA</scope>
    <source>
        <tissue>Larva</tissue>
    </source>
</reference>
<reference key="2">
    <citation type="journal article" date="2012" name="Free Radic. Biol. Med.">
        <title>Coprisin-induced antifungal effects in Candida albicans correlate with apoptotic mechanisms.</title>
        <authorList>
            <person name="Lee J."/>
            <person name="Hwang J.S."/>
            <person name="Hwang I.S."/>
            <person name="Cho J."/>
            <person name="Lee E."/>
            <person name="Kim Y."/>
            <person name="Lee D.G."/>
        </authorList>
    </citation>
    <scope>FUNCTION</scope>
    <scope>SYNTHESIS OF 38-80</scope>
</reference>
<reference key="3">
    <citation type="journal article" date="2016" name="Tumor Biol.">
        <title>Enantiomeric CopA3 dimer peptide suppresses cell viability and tumor xenograft growth of human gastric cancer cells.</title>
        <authorList>
            <person name="Lee J.H."/>
            <person name="Kim I.W."/>
            <person name="Shin Y.P."/>
            <person name="Park H.J."/>
            <person name="Lee Y.S."/>
            <person name="Lee I.H."/>
            <person name="Kim M.A."/>
            <person name="Yun E.Y."/>
            <person name="Nam S.H."/>
            <person name="Ahn M.Y."/>
            <person name="Kang D."/>
            <person name="Hwang J.S."/>
        </authorList>
    </citation>
    <scope>PHARMACEUTICAL (COPA3)</scope>
</reference>
<reference key="4">
    <citation type="journal article" date="2019" name="Biochim. Biophys. Acta">
        <title>A potent antibacterial activity of new short d-enantiomeric lipopeptide against multi drug resistant bacteria.</title>
        <authorList>
            <person name="Lee J."/>
            <person name="Kim S."/>
            <person name="Sim J.Y."/>
            <person name="Lee D."/>
            <person name="Kim H.H."/>
            <person name="Hwang J.S."/>
            <person name="Lee D.G."/>
            <person name="Park Z.Y."/>
            <person name="Kim J.I."/>
        </authorList>
    </citation>
    <scope>PHARMACEUTICAL (DCOPW3)</scope>
</reference>
<reference evidence="11" key="5">
    <citation type="journal article" date="2013" name="Biochim. Biophys. Acta">
        <title>Insight into the antimicrobial activities of coprisin isolated from the dung beetle, Copris tripartitus, revealed by structure-activity relationships.</title>
        <authorList>
            <person name="Lee E."/>
            <person name="Kim J.K."/>
            <person name="Shin S."/>
            <person name="Jeong K.W."/>
            <person name="Shin A."/>
            <person name="Lee J."/>
            <person name="Lee D.G."/>
            <person name="Hwang J.S."/>
            <person name="Kim Y."/>
        </authorList>
    </citation>
    <scope>STRUCTURE BY NMR OF 38-80</scope>
    <scope>FUNCTION</scope>
    <scope>DISULFIDE BONDS</scope>
    <scope>SYNTHESIS OF 38-80</scope>
    <scope>PHARMACEUTICAL (COPA3)</scope>
</reference>